<accession>Q9YLR1</accession>
<organismHost>
    <name type="scientific">Bandicota bengalensis</name>
    <name type="common">lesser bandicoot rat</name>
    <dbReference type="NCBI Taxonomy" id="69079"/>
</organismHost>
<organismHost>
    <name type="scientific">Callithrix</name>
    <dbReference type="NCBI Taxonomy" id="9481"/>
</organismHost>
<organismHost>
    <name type="scientific">Cercopithecus hamlyni</name>
    <name type="common">Owl-faced monkey</name>
    <name type="synonym">Hamlyn's monkey</name>
    <dbReference type="NCBI Taxonomy" id="9536"/>
</organismHost>
<organismHost>
    <name type="scientific">Chlorocebus aethiops</name>
    <name type="common">Green monkey</name>
    <name type="synonym">Cercopithecus aethiops</name>
    <dbReference type="NCBI Taxonomy" id="9534"/>
</organismHost>
<organismHost>
    <name type="scientific">Homo sapiens</name>
    <name type="common">Human</name>
    <dbReference type="NCBI Taxonomy" id="9606"/>
</organismHost>
<organismHost>
    <name type="scientific">Macaca</name>
    <name type="common">macaques</name>
    <dbReference type="NCBI Taxonomy" id="9539"/>
</organismHost>
<organismHost>
    <name type="scientific">Mus musculus</name>
    <name type="common">Mouse</name>
    <dbReference type="NCBI Taxonomy" id="10090"/>
</organismHost>
<organismHost>
    <name type="scientific">Pan troglodytes</name>
    <name type="common">Chimpanzee</name>
    <dbReference type="NCBI Taxonomy" id="9598"/>
</organismHost>
<organismHost>
    <name type="scientific">Saimiri</name>
    <name type="common">squirrel monkeys</name>
    <dbReference type="NCBI Taxonomy" id="9520"/>
</organismHost>
<organismHost>
    <name type="scientific">Sus scrofa</name>
    <name type="common">Pig</name>
    <dbReference type="NCBI Taxonomy" id="9823"/>
</organismHost>
<keyword id="KW-0067">ATP-binding</keyword>
<keyword id="KW-1015">Disulfide bond</keyword>
<keyword id="KW-0347">Helicase</keyword>
<keyword id="KW-1035">Host cytoplasm</keyword>
<keyword id="KW-0378">Hydrolase</keyword>
<keyword id="KW-0460">Magnesium</keyword>
<keyword id="KW-0479">Metal-binding</keyword>
<keyword id="KW-0489">Methyltransferase</keyword>
<keyword id="KW-0547">Nucleotide-binding</keyword>
<keyword id="KW-0548">Nucleotidyltransferase</keyword>
<keyword id="KW-0645">Protease</keyword>
<keyword id="KW-0694">RNA-binding</keyword>
<keyword id="KW-0696">RNA-directed RNA polymerase</keyword>
<keyword id="KW-0788">Thiol protease</keyword>
<keyword id="KW-0808">Transferase</keyword>
<keyword id="KW-0693">Viral RNA replication</keyword>
<keyword id="KW-0862">Zinc</keyword>
<dbReference type="EC" id="2.1.1.-" evidence="4"/>
<dbReference type="EC" id="2.7.7.-" evidence="3"/>
<dbReference type="EC" id="3.4.-.-" evidence="3"/>
<dbReference type="EC" id="3.6.4.-" evidence="5"/>
<dbReference type="EC" id="2.7.7.48"/>
<dbReference type="EMBL" id="AF060669">
    <property type="protein sequence ID" value="AAD15815.1"/>
    <property type="molecule type" value="Genomic_DNA"/>
</dbReference>
<dbReference type="Proteomes" id="UP000007247">
    <property type="component" value="Genome"/>
</dbReference>
<dbReference type="GO" id="GO:0044220">
    <property type="term" value="C:host cell perinuclear region of cytoplasm"/>
    <property type="evidence" value="ECO:0007669"/>
    <property type="project" value="UniProtKB-SubCell"/>
</dbReference>
<dbReference type="GO" id="GO:0005524">
    <property type="term" value="F:ATP binding"/>
    <property type="evidence" value="ECO:0007669"/>
    <property type="project" value="UniProtKB-KW"/>
</dbReference>
<dbReference type="GO" id="GO:0008234">
    <property type="term" value="F:cysteine-type peptidase activity"/>
    <property type="evidence" value="ECO:0007669"/>
    <property type="project" value="UniProtKB-KW"/>
</dbReference>
<dbReference type="GO" id="GO:0004386">
    <property type="term" value="F:helicase activity"/>
    <property type="evidence" value="ECO:0007669"/>
    <property type="project" value="UniProtKB-KW"/>
</dbReference>
<dbReference type="GO" id="GO:0046872">
    <property type="term" value="F:metal ion binding"/>
    <property type="evidence" value="ECO:0007669"/>
    <property type="project" value="UniProtKB-KW"/>
</dbReference>
<dbReference type="GO" id="GO:0008174">
    <property type="term" value="F:mRNA methyltransferase activity"/>
    <property type="evidence" value="ECO:0007669"/>
    <property type="project" value="InterPro"/>
</dbReference>
<dbReference type="GO" id="GO:0003723">
    <property type="term" value="F:RNA binding"/>
    <property type="evidence" value="ECO:0007669"/>
    <property type="project" value="UniProtKB-KW"/>
</dbReference>
<dbReference type="GO" id="GO:0003968">
    <property type="term" value="F:RNA-directed RNA polymerase activity"/>
    <property type="evidence" value="ECO:0007669"/>
    <property type="project" value="UniProtKB-KW"/>
</dbReference>
<dbReference type="GO" id="GO:0006351">
    <property type="term" value="P:DNA-templated transcription"/>
    <property type="evidence" value="ECO:0007669"/>
    <property type="project" value="InterPro"/>
</dbReference>
<dbReference type="GO" id="GO:0032259">
    <property type="term" value="P:methylation"/>
    <property type="evidence" value="ECO:0007669"/>
    <property type="project" value="UniProtKB-KW"/>
</dbReference>
<dbReference type="GO" id="GO:0016556">
    <property type="term" value="P:mRNA modification"/>
    <property type="evidence" value="ECO:0007669"/>
    <property type="project" value="InterPro"/>
</dbReference>
<dbReference type="GO" id="GO:0006508">
    <property type="term" value="P:proteolysis"/>
    <property type="evidence" value="ECO:0007669"/>
    <property type="project" value="UniProtKB-KW"/>
</dbReference>
<dbReference type="GO" id="GO:0006396">
    <property type="term" value="P:RNA processing"/>
    <property type="evidence" value="ECO:0007669"/>
    <property type="project" value="InterPro"/>
</dbReference>
<dbReference type="GO" id="GO:0019082">
    <property type="term" value="P:viral protein processing"/>
    <property type="evidence" value="ECO:0007669"/>
    <property type="project" value="InterPro"/>
</dbReference>
<dbReference type="GO" id="GO:0039694">
    <property type="term" value="P:viral RNA genome replication"/>
    <property type="evidence" value="ECO:0007669"/>
    <property type="project" value="InterPro"/>
</dbReference>
<dbReference type="CDD" id="cd23259">
    <property type="entry name" value="Hepeviridae_RdRp"/>
    <property type="match status" value="1"/>
</dbReference>
<dbReference type="CDD" id="cd21557">
    <property type="entry name" value="Macro_X_Nsp3-like"/>
    <property type="match status" value="1"/>
</dbReference>
<dbReference type="CDD" id="cd18809">
    <property type="entry name" value="SF1_C_RecD"/>
    <property type="match status" value="1"/>
</dbReference>
<dbReference type="FunFam" id="3.40.50.300:FF:001668">
    <property type="entry name" value="Non-structural polyprotein pORF1"/>
    <property type="match status" value="1"/>
</dbReference>
<dbReference type="FunFam" id="3.40.50.300:FF:001964">
    <property type="entry name" value="Non-structural polyprotein pORF1"/>
    <property type="match status" value="1"/>
</dbReference>
<dbReference type="Gene3D" id="3.40.220.10">
    <property type="entry name" value="Leucine Aminopeptidase, subunit E, domain 1"/>
    <property type="match status" value="1"/>
</dbReference>
<dbReference type="Gene3D" id="3.40.50.300">
    <property type="entry name" value="P-loop containing nucleotide triphosphate hydrolases"/>
    <property type="match status" value="2"/>
</dbReference>
<dbReference type="InterPro" id="IPR027351">
    <property type="entry name" value="(+)RNA_virus_helicase_core_dom"/>
</dbReference>
<dbReference type="InterPro" id="IPR002588">
    <property type="entry name" value="Alphavirus-like_MT_dom"/>
</dbReference>
<dbReference type="InterPro" id="IPR043502">
    <property type="entry name" value="DNA/RNA_pol_sf"/>
</dbReference>
<dbReference type="InterPro" id="IPR008748">
    <property type="entry name" value="Hepatitis-E_Cys-pept"/>
</dbReference>
<dbReference type="InterPro" id="IPR022202">
    <property type="entry name" value="Hepatitis-E_hinge"/>
</dbReference>
<dbReference type="InterPro" id="IPR047307">
    <property type="entry name" value="Hepeviridae_RdRp"/>
</dbReference>
<dbReference type="InterPro" id="IPR002589">
    <property type="entry name" value="Macro_dom"/>
</dbReference>
<dbReference type="InterPro" id="IPR043472">
    <property type="entry name" value="Macro_dom-like"/>
</dbReference>
<dbReference type="InterPro" id="IPR044371">
    <property type="entry name" value="Macro_X_NSP3-like"/>
</dbReference>
<dbReference type="InterPro" id="IPR027417">
    <property type="entry name" value="P-loop_NTPase"/>
</dbReference>
<dbReference type="InterPro" id="IPR001788">
    <property type="entry name" value="RNA-dep_RNA_pol_alsuvir"/>
</dbReference>
<dbReference type="InterPro" id="IPR007094">
    <property type="entry name" value="RNA-dir_pol_PSvirus"/>
</dbReference>
<dbReference type="Pfam" id="PF12526">
    <property type="entry name" value="DUF3729"/>
    <property type="match status" value="1"/>
</dbReference>
<dbReference type="Pfam" id="PF01661">
    <property type="entry name" value="Macro"/>
    <property type="match status" value="1"/>
</dbReference>
<dbReference type="Pfam" id="PF05417">
    <property type="entry name" value="Peptidase_C41"/>
    <property type="match status" value="1"/>
</dbReference>
<dbReference type="Pfam" id="PF00978">
    <property type="entry name" value="RdRP_2"/>
    <property type="match status" value="1"/>
</dbReference>
<dbReference type="Pfam" id="PF01443">
    <property type="entry name" value="Viral_helicase1"/>
    <property type="match status" value="1"/>
</dbReference>
<dbReference type="Pfam" id="PF01660">
    <property type="entry name" value="Vmethyltransf"/>
    <property type="match status" value="1"/>
</dbReference>
<dbReference type="SMART" id="SM00506">
    <property type="entry name" value="A1pp"/>
    <property type="match status" value="1"/>
</dbReference>
<dbReference type="SUPFAM" id="SSF56672">
    <property type="entry name" value="DNA/RNA polymerases"/>
    <property type="match status" value="1"/>
</dbReference>
<dbReference type="SUPFAM" id="SSF52949">
    <property type="entry name" value="Macro domain-like"/>
    <property type="match status" value="1"/>
</dbReference>
<dbReference type="SUPFAM" id="SSF52540">
    <property type="entry name" value="P-loop containing nucleoside triphosphate hydrolases"/>
    <property type="match status" value="2"/>
</dbReference>
<dbReference type="PROSITE" id="PS51743">
    <property type="entry name" value="ALPHAVIRUS_MT"/>
    <property type="match status" value="1"/>
</dbReference>
<dbReference type="PROSITE" id="PS51154">
    <property type="entry name" value="MACRO"/>
    <property type="match status" value="1"/>
</dbReference>
<dbReference type="PROSITE" id="PS51657">
    <property type="entry name" value="PSRV_HELICASE"/>
    <property type="match status" value="1"/>
</dbReference>
<dbReference type="PROSITE" id="PS50507">
    <property type="entry name" value="RDRP_SSRNA_POS"/>
    <property type="match status" value="1"/>
</dbReference>
<sequence>MEAHQFIKAPGITTAIEQAALAAANSALANAVVVRPFLSRVQTEILINLMQPRQLVFRPEVLWNHPIQRVIHNELEQYCRARAGRCLEVGAHPRSINDNPNVLHRCFLRPVGRDVQRWYSAPTRGPAANCRRSALRGLPPVDRTYCFDGFSRCAFAAETGVALYSLHDLWPADVAEAMARHGMTRLYAALHLPPEVLLPPGTYHTTSYLLIHDGNRAVVTYEGDTSAGYNHDVSILRAWIRTTKIVGDHPLVIERVRAIGCHFVLLLTAAPEPSPMPYVPYPRSTEVYVRSIFGPGGSPSLFPSACSTKSTFHAVPVHIWDXLMLFGATLXDQAFCCSRLMTYLRGISYKVTVGALVANEGWNASEDALTAVITAAYLTICHQRYLRTQAISKGMRRLEVEHAQKFITRLYSWLFEKSGRDYIPGRQLQFYAQCRRWLSAGFHLXPRXLVFDESVPCRCRTFLKKVAGKFCCFMRWLGQECTCFLEPAEGLVGDQGHDNEAYEGSEVDPAEPAHLDVSGTYAVHGHQLEALYRALNVPHDIAARASRLTATVELVASPDRLECRTVLGNKTFRTTVVDGAHLEANGPEEYVLSFDASRQSMGAGSHSLTYELTPAGLQVKISSNGLDCTATFPPGGAPSAAPGEVAAFCSALYRYNRFTQRHSLTGGLWLHPEGLLGIFPPFSPGHIWESANPFCGEGTLYTRTWSTSGFSSDFSPPEAAAPASAAAPGLPYPTPPVSDIWVLPPPSEESHVDAASVPSVPEPAGLTSPIVLTPPPPPPPVRKPATSPPPRTRRLLYTYPDGAKVYAGSLXESDCDWLVNASNPGHRPGGGLCHAFYQRFPEAFYSTEFIMREGLAAYTLTPRPIIHAVAPDYRVEQNPKRLEAAYRETCSRRGTAAYPLLGSGIYQVPVSLSFDAWERNHRPGDELYLTEPAAAWFEANKPAQPALTITEDTARTANLALEIDAATEVGRACAGCTISPGIVHYQFTAGVPGSGKSRSIQQGDVDVVVVPTRELRNSWRRRGFAAFTPHTAARVTIGRRVVIDEAPSLPPHLLLLHMQRASSVHLLGDPNQIPAIDFEHAGLVPAIRPELAPTSWWHVTHRCPADVCELIRGAYPKIQTTSRVLRSLFWNEPAIGQKLVFTQAAKAANPGAITVHEAQGATFTETTIIATADARGLIQSSRAHAIVALTRHTEKCVILDAPGLLREVGISDVIVNNFFLAGGEVGHHRPSVIPRGNPDQNLGTLQAFPPSCQISAYHQLAEELGHRPAPVAAVLPPCPELEQGLLYMPQELTVSDSVLVFELTDIVHCRMAAPSQRKAVLSTLVGRYGRRTKLYEAAHSDVRESLARFIPTIGPVRATTCELYELVEAMVEKGQDGSAVLELDLCNRDVSRITFFQKDCNKFTTGETIAHGKVGQGISAWSKTFCALFGPWFRAIEKEILALLPPNIFYGDAYEESVFAAAVSGAGSCMVFENDFSEFDSTQNNFSLGLECVVMEECGMPQWLIRLYHLVRSAWILQAPKESLKGFWKKHSGEPGTLLWNTVWNMAIIAHCYEFRDFRVAAFKGDDSVVLCSDYRQXRNAAALIAGCGLKLKVDYRPIGLYAGVVVAPGLGTLPDVVRFAGRLSEKNWGPGPERAEQLRLAVCDFLRGLTNVAQVCVDVVSRVYGVSPGLVHNLIGMLQTIADGKAHFTENIKPVLDLTNSIIQRVE</sequence>
<feature type="chain" id="PRO_0000334531" description="Non-structural polyprotein pORF1">
    <location>
        <begin position="1"/>
        <end position="1708"/>
    </location>
</feature>
<feature type="domain" description="Alphavirus-like MT" evidence="10">
    <location>
        <begin position="56"/>
        <end position="240"/>
    </location>
</feature>
<feature type="domain" description="Macro" evidence="8">
    <location>
        <begin position="790"/>
        <end position="936"/>
    </location>
</feature>
<feature type="domain" description="(+)RNA virus helicase ATP-binding">
    <location>
        <begin position="949"/>
        <end position="1097"/>
    </location>
</feature>
<feature type="domain" description="(+)RNA virus helicase C-terminal">
    <location>
        <begin position="1098"/>
        <end position="1231"/>
    </location>
</feature>
<feature type="domain" description="RdRp catalytic" evidence="9">
    <location>
        <begin position="1469"/>
        <end position="1580"/>
    </location>
</feature>
<feature type="region of interest" description="Methyltransferase" evidence="1">
    <location>
        <begin position="60"/>
        <end position="240"/>
    </location>
</feature>
<feature type="region of interest" description="Y-domain" evidence="5">
    <location>
        <begin position="241"/>
        <end position="439"/>
    </location>
</feature>
<feature type="region of interest" description="Putative protease" evidence="3">
    <location>
        <begin position="442"/>
        <end position="509"/>
    </location>
</feature>
<feature type="region of interest" description="Zinc-binding" evidence="3">
    <location>
        <begin position="510"/>
        <end position="691"/>
    </location>
</feature>
<feature type="region of interest" description="Hinge" evidence="1">
    <location>
        <begin position="714"/>
        <end position="793"/>
    </location>
</feature>
<feature type="region of interest" description="Disordered" evidence="11">
    <location>
        <begin position="747"/>
        <end position="792"/>
    </location>
</feature>
<feature type="region of interest" description="X-domain" evidence="1">
    <location>
        <begin position="800"/>
        <end position="957"/>
    </location>
</feature>
<feature type="region of interest" description="NTPase/helicase" evidence="1">
    <location>
        <begin position="975"/>
        <end position="1219"/>
    </location>
</feature>
<feature type="region of interest" description="RNA-directed RNA polymerase" evidence="1">
    <location>
        <begin position="1222"/>
        <end position="1708"/>
    </location>
</feature>
<feature type="compositionally biased region" description="Pro residues" evidence="11">
    <location>
        <begin position="772"/>
        <end position="790"/>
    </location>
</feature>
<feature type="binding site" evidence="3">
    <location>
        <position position="671"/>
    </location>
    <ligand>
        <name>Zn(2+)</name>
        <dbReference type="ChEBI" id="CHEBI:29105"/>
    </ligand>
</feature>
<feature type="binding site" evidence="3">
    <location>
        <position position="673"/>
    </location>
    <ligand>
        <name>Zn(2+)</name>
        <dbReference type="ChEBI" id="CHEBI:29105"/>
    </ligand>
</feature>
<feature type="binding site" evidence="3">
    <location>
        <position position="686"/>
    </location>
    <ligand>
        <name>Zn(2+)</name>
        <dbReference type="ChEBI" id="CHEBI:29105"/>
    </ligand>
</feature>
<feature type="binding site" evidence="7">
    <location>
        <begin position="990"/>
        <end position="997"/>
    </location>
    <ligand>
        <name>ATP</name>
        <dbReference type="ChEBI" id="CHEBI:30616"/>
    </ligand>
</feature>
<feature type="disulfide bond" evidence="5">
    <location>
        <begin position="434"/>
        <end position="481"/>
    </location>
</feature>
<proteinExistence type="inferred from homology"/>
<comment type="function">
    <text evidence="5">Methyltransferase: Displays a capping enzyme activity. This function is necessary since all viral RNAs are synthesized in the cytoplasm, and host capping enzymes are restricted to the nucleus. The enzymatic reaction involves a covalent link between 7-methyl-GMP and the methyltransferase, whereas eukaryotic capping enzymes form a covalent complex only with GMP. Methyltransferase catalyzes transfer of a methyl group from S-adenosylmethionine to GTP and GDP to yield m(7)GTP or m(7)GDP. GDP is a better substrate than GTP. This enzyme also displays guanylyltransferase activity to form a covalent complex, methyltransferase-m(7)GMP, from which 7-methyl-GMP is transferred to the mRNA to create the cap structure.</text>
</comment>
<comment type="function">
    <text evidence="5">Y-domain: Indispensable for virus replication.</text>
</comment>
<comment type="function">
    <text evidence="5">Putative protease: The putative protease domain although necessary for replication of the virus may not be a protease but rather a structural Zn(2+)-binding domain. Inhibits induction of IFN-beta by MDA5 and RIG-I pathways and down-regulates the expression of MDA5.</text>
</comment>
<comment type="function">
    <text evidence="2 5">NTPase/helicase: Multi-functional protein that exhibits NTPase and RNA unwinding activities (By similarity). Hydrolyzes all NTPs efficiently and unwinds RNA duplexes containing 5' overhangs (By similarity). Possesses a sequence independent RNA-5'-triphosphatase (RTPase) activity suggestive of its role in forming viral cap structure. Also participates in viral genome replication, RNA translocation and genome packaging/unpackaging (By similarity).</text>
</comment>
<comment type="function">
    <text evidence="5 6">RNA-directed RNA polymerase: Plays an essential role in the virus replication (By similarity). Binds to the 3'-end of the genomic RNA to initiate viral replication (By similarity).</text>
</comment>
<comment type="catalytic activity">
    <reaction evidence="9">
        <text>RNA(n) + a ribonucleoside 5'-triphosphate = RNA(n+1) + diphosphate</text>
        <dbReference type="Rhea" id="RHEA:21248"/>
        <dbReference type="Rhea" id="RHEA-COMP:14527"/>
        <dbReference type="Rhea" id="RHEA-COMP:17342"/>
        <dbReference type="ChEBI" id="CHEBI:33019"/>
        <dbReference type="ChEBI" id="CHEBI:61557"/>
        <dbReference type="ChEBI" id="CHEBI:140395"/>
        <dbReference type="EC" id="2.7.7.48"/>
    </reaction>
</comment>
<comment type="catalytic activity">
    <reaction evidence="5">
        <text>GTP + S-adenosyl-L-methionine = N(7)-methyl-GTP + S-adenosyl-L-homocysteine</text>
        <dbReference type="Rhea" id="RHEA:46948"/>
        <dbReference type="ChEBI" id="CHEBI:37565"/>
        <dbReference type="ChEBI" id="CHEBI:57856"/>
        <dbReference type="ChEBI" id="CHEBI:59789"/>
        <dbReference type="ChEBI" id="CHEBI:87133"/>
    </reaction>
    <physiologicalReaction direction="left-to-right" evidence="5">
        <dbReference type="Rhea" id="RHEA:46949"/>
    </physiologicalReaction>
</comment>
<comment type="cofactor">
    <cofactor evidence="5">
        <name>Mg(2+)</name>
        <dbReference type="ChEBI" id="CHEBI:18420"/>
    </cofactor>
    <text evidence="5">For methyltransferase activity.</text>
</comment>
<comment type="activity regulation">
    <text evidence="5">Putative protease: Inhibited by chymostatin.</text>
</comment>
<comment type="subunit">
    <text evidence="3">The protease domain interacts with host EIF2AK4 (via C-terminus); this interaction inhibits dimerization of EIF2AK4 and prevents EIF2AK4-mediated phosphorylation of host EIF2A.</text>
</comment>
<comment type="subcellular location">
    <subcellularLocation>
        <location evidence="5">Host cytoplasm</location>
    </subcellularLocation>
    <subcellularLocation>
        <location evidence="5">Host cytoplasm</location>
        <location evidence="5">Host perinuclear region</location>
    </subcellularLocation>
</comment>
<comment type="domain">
    <text evidence="3 5">Contains a methyltransferase domain, a Y-domain, a putative protease region, a zinc-binding region with similarity to calycins, a proline-rich disordered hypervariable region (HVR), a macro domain (also called X-domain), a helicase domain and an RNA-dependent RNA polymerase domain (By similarity). Since the boundaries and the activity of the putative protease are not clearly defined, the zinc-binding region might be part of the putative protease (By similarity).</text>
</comment>
<comment type="PTM">
    <text evidence="5">ORF1 polyprotein does not seem to be processed into distinct enzymatic domains by a viral protease belonging to ORF1, but could be processed by a host serine protease like thrombin.</text>
</comment>
<comment type="similarity">
    <text evidence="12">Belongs to the hepevirus non-structural polyprotein family.</text>
</comment>
<gene>
    <name type="ORF">ORF1</name>
</gene>
<evidence type="ECO:0000250" key="1"/>
<evidence type="ECO:0000250" key="2">
    <source>
        <dbReference type="UniProtKB" id="P29324"/>
    </source>
</evidence>
<evidence type="ECO:0000250" key="3">
    <source>
        <dbReference type="UniProtKB" id="P33424"/>
    </source>
</evidence>
<evidence type="ECO:0000250" key="4">
    <source>
        <dbReference type="UniProtKB" id="Q04610"/>
    </source>
</evidence>
<evidence type="ECO:0000250" key="5">
    <source>
        <dbReference type="UniProtKB" id="Q81862"/>
    </source>
</evidence>
<evidence type="ECO:0000250" key="6">
    <source>
        <dbReference type="UniProtKB" id="Q9WC28"/>
    </source>
</evidence>
<evidence type="ECO:0000255" key="7"/>
<evidence type="ECO:0000255" key="8">
    <source>
        <dbReference type="PROSITE-ProRule" id="PRU00490"/>
    </source>
</evidence>
<evidence type="ECO:0000255" key="9">
    <source>
        <dbReference type="PROSITE-ProRule" id="PRU00539"/>
    </source>
</evidence>
<evidence type="ECO:0000255" key="10">
    <source>
        <dbReference type="PROSITE-ProRule" id="PRU01079"/>
    </source>
</evidence>
<evidence type="ECO:0000256" key="11">
    <source>
        <dbReference type="SAM" id="MobiDB-lite"/>
    </source>
</evidence>
<evidence type="ECO:0000305" key="12"/>
<organism>
    <name type="scientific">Hepatitis E virus genotype 3 (isolate Human/United States/US2)</name>
    <name type="common">HEV-3</name>
    <dbReference type="NCBI Taxonomy" id="509615"/>
    <lineage>
        <taxon>Viruses</taxon>
        <taxon>Riboviria</taxon>
        <taxon>Orthornavirae</taxon>
        <taxon>Kitrinoviricota</taxon>
        <taxon>Alsuviricetes</taxon>
        <taxon>Hepelivirales</taxon>
        <taxon>Hepeviridae</taxon>
        <taxon>Orthohepevirinae</taxon>
        <taxon>Paslahepevirus</taxon>
        <taxon>Hepatitis E virus</taxon>
    </lineage>
</organism>
<reference key="1">
    <citation type="journal article" date="1999" name="J. Gen. Virol.">
        <title>A hepatitis E virus variant from the United States: molecular characterization and transmission in cynomolgus macaques.</title>
        <authorList>
            <person name="Erker J.C."/>
            <person name="Desai S.M."/>
            <person name="Schlauder G.G."/>
            <person name="Dawson G.J."/>
            <person name="Mushahwar I.K."/>
        </authorList>
    </citation>
    <scope>NUCLEOTIDE SEQUENCE [GENOMIC DNA]</scope>
</reference>
<name>POLN_HEVUS</name>
<protein>
    <recommendedName>
        <fullName>Non-structural polyprotein pORF1</fullName>
    </recommendedName>
    <domain>
        <recommendedName>
            <fullName>Methyltransferase</fullName>
            <ecNumber evidence="4">2.1.1.-</ecNumber>
            <ecNumber evidence="3">2.7.7.-</ecNumber>
        </recommendedName>
    </domain>
    <domain>
        <recommendedName>
            <fullName>Putative protease</fullName>
            <ecNumber evidence="3">3.4.-.-</ecNumber>
        </recommendedName>
        <alternativeName>
            <fullName evidence="3">Putative papain-like cysteine protease</fullName>
            <shortName evidence="3">PCP</shortName>
        </alternativeName>
    </domain>
    <domain>
        <recommendedName>
            <fullName>NTPase/helicase</fullName>
            <ecNumber evidence="5">3.6.4.-</ecNumber>
        </recommendedName>
    </domain>
    <domain>
        <recommendedName>
            <fullName>RNA-directed RNA polymerase</fullName>
            <shortName>RdRp</shortName>
            <ecNumber>2.7.7.48</ecNumber>
        </recommendedName>
    </domain>
</protein>